<protein>
    <recommendedName>
        <fullName evidence="1">Sulfate adenylyltransferase</fullName>
        <ecNumber evidence="1">2.7.7.4</ecNumber>
    </recommendedName>
    <alternativeName>
        <fullName evidence="1">ATP-sulfurylase</fullName>
    </alternativeName>
    <alternativeName>
        <fullName evidence="1">Sulfate adenylate transferase</fullName>
        <shortName evidence="1">SAT</shortName>
    </alternativeName>
</protein>
<accession>Q81FZ0</accession>
<reference key="1">
    <citation type="journal article" date="2003" name="Nature">
        <title>Genome sequence of Bacillus cereus and comparative analysis with Bacillus anthracis.</title>
        <authorList>
            <person name="Ivanova N."/>
            <person name="Sorokin A."/>
            <person name="Anderson I."/>
            <person name="Galleron N."/>
            <person name="Candelon B."/>
            <person name="Kapatral V."/>
            <person name="Bhattacharyya A."/>
            <person name="Reznik G."/>
            <person name="Mikhailova N."/>
            <person name="Lapidus A."/>
            <person name="Chu L."/>
            <person name="Mazur M."/>
            <person name="Goltsman E."/>
            <person name="Larsen N."/>
            <person name="D'Souza M."/>
            <person name="Walunas T."/>
            <person name="Grechkin Y."/>
            <person name="Pusch G."/>
            <person name="Haselkorn R."/>
            <person name="Fonstein M."/>
            <person name="Ehrlich S.D."/>
            <person name="Overbeek R."/>
            <person name="Kyrpides N.C."/>
        </authorList>
    </citation>
    <scope>NUCLEOTIDE SEQUENCE [LARGE SCALE GENOMIC DNA]</scope>
    <source>
        <strain>ATCC 14579 / DSM 31 / CCUG 7414 / JCM 2152 / NBRC 15305 / NCIMB 9373 / NCTC 2599 / NRRL B-3711</strain>
    </source>
</reference>
<feature type="chain" id="PRO_0000340610" description="Sulfate adenylyltransferase">
    <location>
        <begin position="1"/>
        <end position="378"/>
    </location>
</feature>
<comment type="catalytic activity">
    <reaction evidence="1">
        <text>sulfate + ATP + H(+) = adenosine 5'-phosphosulfate + diphosphate</text>
        <dbReference type="Rhea" id="RHEA:18133"/>
        <dbReference type="ChEBI" id="CHEBI:15378"/>
        <dbReference type="ChEBI" id="CHEBI:16189"/>
        <dbReference type="ChEBI" id="CHEBI:30616"/>
        <dbReference type="ChEBI" id="CHEBI:33019"/>
        <dbReference type="ChEBI" id="CHEBI:58243"/>
        <dbReference type="EC" id="2.7.7.4"/>
    </reaction>
</comment>
<comment type="pathway">
    <text evidence="1">Sulfur metabolism; hydrogen sulfide biosynthesis; sulfite from sulfate: step 1/3.</text>
</comment>
<comment type="similarity">
    <text evidence="1">Belongs to the sulfate adenylyltransferase family.</text>
</comment>
<dbReference type="EC" id="2.7.7.4" evidence="1"/>
<dbReference type="EMBL" id="AE016877">
    <property type="protein sequence ID" value="AAP08403.1"/>
    <property type="molecule type" value="Genomic_DNA"/>
</dbReference>
<dbReference type="RefSeq" id="NP_831202.1">
    <property type="nucleotide sequence ID" value="NC_004722.1"/>
</dbReference>
<dbReference type="RefSeq" id="WP_000029491.1">
    <property type="nucleotide sequence ID" value="NZ_CP138336.1"/>
</dbReference>
<dbReference type="SMR" id="Q81FZ0"/>
<dbReference type="STRING" id="226900.BC_1422"/>
<dbReference type="KEGG" id="bce:BC1422"/>
<dbReference type="PATRIC" id="fig|226900.8.peg.1399"/>
<dbReference type="HOGENOM" id="CLU_022950_1_1_9"/>
<dbReference type="OrthoDB" id="9804504at2"/>
<dbReference type="UniPathway" id="UPA00140">
    <property type="reaction ID" value="UER00204"/>
</dbReference>
<dbReference type="Proteomes" id="UP000001417">
    <property type="component" value="Chromosome"/>
</dbReference>
<dbReference type="GO" id="GO:0005524">
    <property type="term" value="F:ATP binding"/>
    <property type="evidence" value="ECO:0007669"/>
    <property type="project" value="UniProtKB-KW"/>
</dbReference>
<dbReference type="GO" id="GO:0004781">
    <property type="term" value="F:sulfate adenylyltransferase (ATP) activity"/>
    <property type="evidence" value="ECO:0007669"/>
    <property type="project" value="UniProtKB-UniRule"/>
</dbReference>
<dbReference type="GO" id="GO:0070814">
    <property type="term" value="P:hydrogen sulfide biosynthetic process"/>
    <property type="evidence" value="ECO:0007669"/>
    <property type="project" value="UniProtKB-UniRule"/>
</dbReference>
<dbReference type="GO" id="GO:0000103">
    <property type="term" value="P:sulfate assimilation"/>
    <property type="evidence" value="ECO:0007669"/>
    <property type="project" value="UniProtKB-UniRule"/>
</dbReference>
<dbReference type="CDD" id="cd00517">
    <property type="entry name" value="ATPS"/>
    <property type="match status" value="1"/>
</dbReference>
<dbReference type="Gene3D" id="3.40.50.620">
    <property type="entry name" value="HUPs"/>
    <property type="match status" value="1"/>
</dbReference>
<dbReference type="Gene3D" id="3.10.400.10">
    <property type="entry name" value="Sulfate adenylyltransferase"/>
    <property type="match status" value="1"/>
</dbReference>
<dbReference type="HAMAP" id="MF_00066">
    <property type="entry name" value="Sulf_adenylyltr"/>
    <property type="match status" value="1"/>
</dbReference>
<dbReference type="InterPro" id="IPR025980">
    <property type="entry name" value="ATP-Sase_PUA-like_dom"/>
</dbReference>
<dbReference type="InterPro" id="IPR015947">
    <property type="entry name" value="PUA-like_sf"/>
</dbReference>
<dbReference type="InterPro" id="IPR014729">
    <property type="entry name" value="Rossmann-like_a/b/a_fold"/>
</dbReference>
<dbReference type="InterPro" id="IPR020792">
    <property type="entry name" value="SO4_adenylyltransferase_pro"/>
</dbReference>
<dbReference type="InterPro" id="IPR024951">
    <property type="entry name" value="Sulfurylase_cat_dom"/>
</dbReference>
<dbReference type="InterPro" id="IPR002650">
    <property type="entry name" value="Sulphate_adenylyltransferase"/>
</dbReference>
<dbReference type="NCBIfam" id="NF003166">
    <property type="entry name" value="PRK04149.1"/>
    <property type="match status" value="1"/>
</dbReference>
<dbReference type="NCBIfam" id="TIGR00339">
    <property type="entry name" value="sopT"/>
    <property type="match status" value="1"/>
</dbReference>
<dbReference type="PANTHER" id="PTHR43509">
    <property type="match status" value="1"/>
</dbReference>
<dbReference type="PANTHER" id="PTHR43509:SF1">
    <property type="entry name" value="SULFATE ADENYLYLTRANSFERASE"/>
    <property type="match status" value="1"/>
</dbReference>
<dbReference type="Pfam" id="PF01747">
    <property type="entry name" value="ATP-sulfurylase"/>
    <property type="match status" value="1"/>
</dbReference>
<dbReference type="Pfam" id="PF14306">
    <property type="entry name" value="PUA_2"/>
    <property type="match status" value="1"/>
</dbReference>
<dbReference type="SUPFAM" id="SSF52374">
    <property type="entry name" value="Nucleotidylyl transferase"/>
    <property type="match status" value="1"/>
</dbReference>
<dbReference type="SUPFAM" id="SSF88697">
    <property type="entry name" value="PUA domain-like"/>
    <property type="match status" value="1"/>
</dbReference>
<gene>
    <name evidence="1" type="primary">sat</name>
    <name type="ordered locus">BC_1422</name>
</gene>
<name>SAT_BACCR</name>
<evidence type="ECO:0000255" key="1">
    <source>
        <dbReference type="HAMAP-Rule" id="MF_00066"/>
    </source>
</evidence>
<keyword id="KW-0067">ATP-binding</keyword>
<keyword id="KW-0547">Nucleotide-binding</keyword>
<keyword id="KW-0548">Nucleotidyltransferase</keyword>
<keyword id="KW-1185">Reference proteome</keyword>
<keyword id="KW-0808">Transferase</keyword>
<proteinExistence type="inferred from homology"/>
<organism>
    <name type="scientific">Bacillus cereus (strain ATCC 14579 / DSM 31 / CCUG 7414 / JCM 2152 / NBRC 15305 / NCIMB 9373 / NCTC 2599 / NRRL B-3711)</name>
    <dbReference type="NCBI Taxonomy" id="226900"/>
    <lineage>
        <taxon>Bacteria</taxon>
        <taxon>Bacillati</taxon>
        <taxon>Bacillota</taxon>
        <taxon>Bacilli</taxon>
        <taxon>Bacillales</taxon>
        <taxon>Bacillaceae</taxon>
        <taxon>Bacillus</taxon>
        <taxon>Bacillus cereus group</taxon>
    </lineage>
</organism>
<sequence>MSIVNELVNRIDETYDVSQIEKEIKLDNIALSDLELLATGGYSPLTGFLGKEDYDSVVETLRLANGSVWSIPITLPVTEKVAESLKAGEEVKLVNNGNIYGVIQIEDIFVPDKEKEALLVYKTTDEAHPGVKKLYERPNVYVGGTIILTKRFENNQFPSYHLDPIETREAFKKRGWKTVVGFQTRNPVHRAHEYIQKSALEIVDGLFLNPLVGETKSDDIPADVRMESYEVLLQNYYPKNRVFLSVFPAAMRYAGPREAIFHALVRKNFGCTHFIVGRDHAGVGDYYGTYEAQEIFTNFTIEELGITPLFFEHSFYCTKCEAMASTKTCPHGKEDHVILSGTKVRELLRNGEIPPSTFSRKEVVEVLIKGLKKEVVTE</sequence>